<keyword id="KW-0002">3D-structure</keyword>
<keyword id="KW-0150">Chloroplast</keyword>
<keyword id="KW-0186">Copper</keyword>
<keyword id="KW-0249">Electron transport</keyword>
<keyword id="KW-0472">Membrane</keyword>
<keyword id="KW-0479">Metal-binding</keyword>
<keyword id="KW-0934">Plastid</keyword>
<keyword id="KW-0793">Thylakoid</keyword>
<keyword id="KW-0809">Transit peptide</keyword>
<keyword id="KW-0813">Transport</keyword>
<evidence type="ECO:0000250" key="1">
    <source>
        <dbReference type="UniProtKB" id="P18068"/>
    </source>
</evidence>
<evidence type="ECO:0000305" key="2"/>
<evidence type="ECO:0007829" key="3">
    <source>
        <dbReference type="PDB" id="6YEZ"/>
    </source>
</evidence>
<evidence type="ECO:0007829" key="4">
    <source>
        <dbReference type="PDB" id="6ZOO"/>
    </source>
</evidence>
<accession>P16002</accession>
<proteinExistence type="evidence at protein level"/>
<sequence length="168" mass="17154">MATVTSTTVAIPSFSGLKTNAATKVSAMAKIPTSTSQSPRLCVRASLKDFGVALVATAASAVLASNALAVEVLLGASDGGLAFVPSSLEVSAGETIVFKNNAGFPHNVVFDEDEIPAGVDASKISMPEEDLLNAPGETYSVKLDAKGTYKFYCSPHQGAGMVGQVTVN</sequence>
<protein>
    <recommendedName>
        <fullName>Plastocyanin, chloroplastic</fullName>
    </recommendedName>
</protein>
<comment type="function">
    <text evidence="1">Participates in electron transfer between P700 and the cytochrome b6-f complex in photosystem I.</text>
</comment>
<comment type="cofactor">
    <cofactor evidence="1">
        <name>Cu(2+)</name>
        <dbReference type="ChEBI" id="CHEBI:29036"/>
    </cofactor>
</comment>
<comment type="subcellular location">
    <subcellularLocation>
        <location evidence="1">Plastid</location>
        <location evidence="1">Chloroplast thylakoid membrane</location>
        <topology evidence="1">Peripheral membrane protein</topology>
        <orientation evidence="1">Lumenal side</orientation>
    </subcellularLocation>
    <text>Loosely bound to the inner thylakoid membrane surface in chloroplasts (By similarity).</text>
</comment>
<comment type="similarity">
    <text evidence="2">Belongs to the plastocyanin family.</text>
</comment>
<reference key="1">
    <citation type="journal article" date="1989" name="Plant Mol. Biol.">
        <title>Plastocyanin is encoded by a single-copy gene in the pea haploid genome.</title>
        <authorList>
            <person name="Last D.I."/>
            <person name="Gray J.C."/>
        </authorList>
    </citation>
    <scope>NUCLEOTIDE SEQUENCE [GENOMIC DNA]</scope>
    <source>
        <strain>cv. Feltham First</strain>
        <tissue>Shoot</tissue>
    </source>
</reference>
<feature type="transit peptide" description="Chloroplast">
    <location>
        <begin position="1"/>
        <end position="69"/>
    </location>
</feature>
<feature type="chain" id="PRO_0000002891" description="Plastocyanin, chloroplastic">
    <location>
        <begin position="70"/>
        <end position="168"/>
    </location>
</feature>
<feature type="domain" description="Plastocyanin-like">
    <location>
        <begin position="70"/>
        <end position="168"/>
    </location>
</feature>
<feature type="binding site" evidence="1">
    <location>
        <position position="106"/>
    </location>
    <ligand>
        <name>Cu cation</name>
        <dbReference type="ChEBI" id="CHEBI:23378"/>
    </ligand>
</feature>
<feature type="binding site" evidence="1">
    <location>
        <position position="153"/>
    </location>
    <ligand>
        <name>Cu cation</name>
        <dbReference type="ChEBI" id="CHEBI:23378"/>
    </ligand>
</feature>
<feature type="binding site" evidence="1">
    <location>
        <position position="156"/>
    </location>
    <ligand>
        <name>Cu cation</name>
        <dbReference type="ChEBI" id="CHEBI:23378"/>
    </ligand>
</feature>
<feature type="binding site" evidence="1">
    <location>
        <position position="161"/>
    </location>
    <ligand>
        <name>Cu cation</name>
        <dbReference type="ChEBI" id="CHEBI:23378"/>
    </ligand>
</feature>
<feature type="strand" evidence="3">
    <location>
        <begin position="71"/>
        <end position="75"/>
    </location>
</feature>
<feature type="strand" evidence="3">
    <location>
        <begin position="82"/>
        <end position="84"/>
    </location>
</feature>
<feature type="strand" evidence="3">
    <location>
        <begin position="86"/>
        <end position="89"/>
    </location>
</feature>
<feature type="strand" evidence="3">
    <location>
        <begin position="96"/>
        <end position="100"/>
    </location>
</feature>
<feature type="strand" evidence="4">
    <location>
        <begin position="112"/>
        <end position="114"/>
    </location>
</feature>
<feature type="turn" evidence="3">
    <location>
        <begin position="122"/>
        <end position="124"/>
    </location>
</feature>
<feature type="strand" evidence="3">
    <location>
        <begin position="134"/>
        <end position="136"/>
    </location>
</feature>
<feature type="strand" evidence="3">
    <location>
        <begin position="138"/>
        <end position="141"/>
    </location>
</feature>
<feature type="strand" evidence="3">
    <location>
        <begin position="146"/>
        <end position="152"/>
    </location>
</feature>
<feature type="turn" evidence="3">
    <location>
        <begin position="154"/>
        <end position="156"/>
    </location>
</feature>
<feature type="helix" evidence="3">
    <location>
        <begin position="157"/>
        <end position="159"/>
    </location>
</feature>
<feature type="strand" evidence="3">
    <location>
        <begin position="162"/>
        <end position="167"/>
    </location>
</feature>
<gene>
    <name type="primary">PETE</name>
</gene>
<dbReference type="EMBL" id="X16082">
    <property type="protein sequence ID" value="CAA34212.1"/>
    <property type="molecule type" value="Genomic_DNA"/>
</dbReference>
<dbReference type="PIR" id="S04861">
    <property type="entry name" value="S04861"/>
</dbReference>
<dbReference type="PDB" id="6YEZ">
    <property type="method" value="EM"/>
    <property type="resolution" value="2.70 A"/>
    <property type="chains" value="P=70-168"/>
</dbReference>
<dbReference type="PDB" id="6ZOO">
    <property type="method" value="EM"/>
    <property type="resolution" value="2.74 A"/>
    <property type="chains" value="P=70-168"/>
</dbReference>
<dbReference type="PDBsum" id="6YEZ"/>
<dbReference type="PDBsum" id="6ZOO"/>
<dbReference type="EMDB" id="EMD-10798"/>
<dbReference type="EMDB" id="EMD-11326"/>
<dbReference type="SMR" id="P16002"/>
<dbReference type="DIP" id="DIP-631N"/>
<dbReference type="IntAct" id="P16002">
    <property type="interactions" value="1"/>
</dbReference>
<dbReference type="MINT" id="P16002"/>
<dbReference type="GO" id="GO:0009543">
    <property type="term" value="C:chloroplast thylakoid lumen"/>
    <property type="evidence" value="ECO:0007669"/>
    <property type="project" value="TreeGrafter"/>
</dbReference>
<dbReference type="GO" id="GO:0009535">
    <property type="term" value="C:chloroplast thylakoid membrane"/>
    <property type="evidence" value="ECO:0007669"/>
    <property type="project" value="UniProtKB-SubCell"/>
</dbReference>
<dbReference type="GO" id="GO:0005507">
    <property type="term" value="F:copper ion binding"/>
    <property type="evidence" value="ECO:0007669"/>
    <property type="project" value="InterPro"/>
</dbReference>
<dbReference type="GO" id="GO:0046028">
    <property type="term" value="F:electron transporter, transferring electrons from cytochrome b6/f complex of photosystem II activity"/>
    <property type="evidence" value="ECO:0007669"/>
    <property type="project" value="TreeGrafter"/>
</dbReference>
<dbReference type="CDD" id="cd04219">
    <property type="entry name" value="Plastocyanin"/>
    <property type="match status" value="1"/>
</dbReference>
<dbReference type="Gene3D" id="2.60.40.420">
    <property type="entry name" value="Cupredoxins - blue copper proteins"/>
    <property type="match status" value="1"/>
</dbReference>
<dbReference type="InterPro" id="IPR000923">
    <property type="entry name" value="BlueCu_1"/>
</dbReference>
<dbReference type="InterPro" id="IPR028871">
    <property type="entry name" value="BlueCu_1_BS"/>
</dbReference>
<dbReference type="InterPro" id="IPR001235">
    <property type="entry name" value="Copper_blue_Plastocyanin"/>
</dbReference>
<dbReference type="InterPro" id="IPR008972">
    <property type="entry name" value="Cupredoxin"/>
</dbReference>
<dbReference type="InterPro" id="IPR002387">
    <property type="entry name" value="Plastocyanin"/>
</dbReference>
<dbReference type="NCBIfam" id="TIGR02656">
    <property type="entry name" value="cyanin_plasto"/>
    <property type="match status" value="1"/>
</dbReference>
<dbReference type="PANTHER" id="PTHR34192">
    <property type="entry name" value="PLASTOCYANIN MAJOR ISOFORM, CHLOROPLASTIC-RELATED"/>
    <property type="match status" value="1"/>
</dbReference>
<dbReference type="PANTHER" id="PTHR34192:SF10">
    <property type="entry name" value="PLASTOCYANIN MAJOR ISOFORM, CHLOROPLASTIC-RELATED"/>
    <property type="match status" value="1"/>
</dbReference>
<dbReference type="Pfam" id="PF00127">
    <property type="entry name" value="Copper-bind"/>
    <property type="match status" value="1"/>
</dbReference>
<dbReference type="PRINTS" id="PR00156">
    <property type="entry name" value="COPPERBLUE"/>
</dbReference>
<dbReference type="PRINTS" id="PR00157">
    <property type="entry name" value="PLASTOCYANIN"/>
</dbReference>
<dbReference type="SUPFAM" id="SSF49503">
    <property type="entry name" value="Cupredoxins"/>
    <property type="match status" value="1"/>
</dbReference>
<dbReference type="PROSITE" id="PS00196">
    <property type="entry name" value="COPPER_BLUE"/>
    <property type="match status" value="1"/>
</dbReference>
<organism>
    <name type="scientific">Pisum sativum</name>
    <name type="common">Garden pea</name>
    <name type="synonym">Lathyrus oleraceus</name>
    <dbReference type="NCBI Taxonomy" id="3888"/>
    <lineage>
        <taxon>Eukaryota</taxon>
        <taxon>Viridiplantae</taxon>
        <taxon>Streptophyta</taxon>
        <taxon>Embryophyta</taxon>
        <taxon>Tracheophyta</taxon>
        <taxon>Spermatophyta</taxon>
        <taxon>Magnoliopsida</taxon>
        <taxon>eudicotyledons</taxon>
        <taxon>Gunneridae</taxon>
        <taxon>Pentapetalae</taxon>
        <taxon>rosids</taxon>
        <taxon>fabids</taxon>
        <taxon>Fabales</taxon>
        <taxon>Fabaceae</taxon>
        <taxon>Papilionoideae</taxon>
        <taxon>50 kb inversion clade</taxon>
        <taxon>NPAAA clade</taxon>
        <taxon>Hologalegina</taxon>
        <taxon>IRL clade</taxon>
        <taxon>Fabeae</taxon>
        <taxon>Pisum</taxon>
    </lineage>
</organism>
<name>PLAS_PEA</name>